<feature type="chain" id="PRO_0000279253" description="Polymerase acidic protein">
    <location>
        <begin position="1"/>
        <end position="716"/>
    </location>
</feature>
<feature type="short sequence motif" description="Nuclear localization signal 1 (NLS1)" evidence="1 2">
    <location>
        <begin position="124"/>
        <end position="139"/>
    </location>
</feature>
<feature type="short sequence motif" description="Nuclear localization signal 2 (NLS2)" evidence="1 2">
    <location>
        <begin position="184"/>
        <end position="247"/>
    </location>
</feature>
<feature type="binding site" evidence="2">
    <location>
        <position position="41"/>
    </location>
    <ligand>
        <name>Mn(2+)</name>
        <dbReference type="ChEBI" id="CHEBI:29035"/>
        <label>1</label>
    </ligand>
</feature>
<feature type="binding site" evidence="2">
    <location>
        <position position="80"/>
    </location>
    <ligand>
        <name>Mn(2+)</name>
        <dbReference type="ChEBI" id="CHEBI:29035"/>
        <label>2</label>
    </ligand>
</feature>
<feature type="binding site" evidence="2">
    <location>
        <position position="108"/>
    </location>
    <ligand>
        <name>Mn(2+)</name>
        <dbReference type="ChEBI" id="CHEBI:29035"/>
        <label>1</label>
    </ligand>
</feature>
<feature type="binding site" evidence="2">
    <location>
        <position position="108"/>
    </location>
    <ligand>
        <name>Mn(2+)</name>
        <dbReference type="ChEBI" id="CHEBI:29035"/>
        <label>2</label>
    </ligand>
</feature>
<feature type="binding site" evidence="2">
    <location>
        <position position="119"/>
    </location>
    <ligand>
        <name>Mn(2+)</name>
        <dbReference type="ChEBI" id="CHEBI:29035"/>
        <label>1</label>
    </ligand>
</feature>
<feature type="binding site" evidence="2">
    <location>
        <position position="120"/>
    </location>
    <ligand>
        <name>Mn(2+)</name>
        <dbReference type="ChEBI" id="CHEBI:29035"/>
        <label>1</label>
    </ligand>
</feature>
<organismHost>
    <name type="scientific">Aves</name>
    <dbReference type="NCBI Taxonomy" id="8782"/>
</organismHost>
<organismHost>
    <name type="scientific">Cetacea</name>
    <name type="common">whales</name>
    <dbReference type="NCBI Taxonomy" id="9721"/>
</organismHost>
<organismHost>
    <name type="scientific">Homo sapiens</name>
    <name type="common">Human</name>
    <dbReference type="NCBI Taxonomy" id="9606"/>
</organismHost>
<organismHost>
    <name type="scientific">Phocidae</name>
    <name type="common">true seals</name>
    <dbReference type="NCBI Taxonomy" id="9709"/>
</organismHost>
<organismHost>
    <name type="scientific">Sus scrofa</name>
    <name type="common">Pig</name>
    <dbReference type="NCBI Taxonomy" id="9823"/>
</organismHost>
<protein>
    <recommendedName>
        <fullName evidence="2">Polymerase acidic protein</fullName>
        <ecNumber evidence="2">3.1.-.-</ecNumber>
    </recommendedName>
    <alternativeName>
        <fullName evidence="2">RNA-directed RNA polymerase subunit P2</fullName>
    </alternativeName>
</protein>
<evidence type="ECO:0000250" key="1">
    <source>
        <dbReference type="UniProtKB" id="P03433"/>
    </source>
</evidence>
<evidence type="ECO:0000255" key="2">
    <source>
        <dbReference type="HAMAP-Rule" id="MF_04063"/>
    </source>
</evidence>
<proteinExistence type="inferred from homology"/>
<reference key="1">
    <citation type="submission" date="2005-08" db="EMBL/GenBank/DDBJ databases">
        <title>The NIAID influenza genome sequencing project.</title>
        <authorList>
            <person name="Ghedin E."/>
            <person name="Spiro D."/>
            <person name="Miller N."/>
            <person name="Zaborsky J."/>
            <person name="Feldblyum T."/>
            <person name="Subbu V."/>
            <person name="Shumway M."/>
            <person name="Sparenborg J."/>
            <person name="Groveman L."/>
            <person name="Halpin R."/>
            <person name="Sitz J."/>
            <person name="Koo H."/>
            <person name="Salzberg S.L."/>
            <person name="Webster R.G."/>
            <person name="Hoffmann E."/>
            <person name="Krauss S."/>
            <person name="Naeve C."/>
            <person name="Bao Y."/>
            <person name="Bolotov P."/>
            <person name="Dernovoy D."/>
            <person name="Kiryutin B."/>
            <person name="Lipman D.J."/>
            <person name="Tatusova T."/>
        </authorList>
    </citation>
    <scope>NUCLEOTIDE SEQUENCE [GENOMIC RNA]</scope>
</reference>
<gene>
    <name evidence="2" type="primary">PA</name>
</gene>
<name>PA_I72A3</name>
<sequence>MEDFVRQCFNPMIVELAEKAMKEYGEDLKIETNKFAAICTHLEVCFMYSDFHFINEQGESIVVELDDPNALLKHRFEIIEGRDRTMAWTVVNSICNTTGAEKPKFLPDLYDYKENRFIEIGVTRREVHIYYLEKANKIKSENTHIHIFSFTGEEMATKADYTLDEESRARIKTRLFTIRQEMANRGLWDSFRQSERGEETIEERFEITGTMRRLADQSLPPNFSCLENFRAYVDGFEPNGCIEGKLSQMSKEVNARIEPFLKTTPRPIKLPDGPPCFQRSKFLLMDALKLSIEDPSHEGEGIPLYDAIKCMRTFFGWKEPYIVKPHEKGINPNYLLSWKQVLAELQDIENEEKIPRTKNMKKTSQLKWALGENMAPEKVDFDNCRDISDLKQYDSDEPELRSLSSWIQNEFNKACELTDSIWIELDEIGEDVAPIEYIASMRRNYFTAEVSHCRATEYIMKGVYINTALLNASCAAMDDFQLIPMISKCRTKEGRRKTNLYGFIIKGRSHLRNDTDVVNFVSMEFSLTDPRLEPHKWEKYCVLEIGDMLLRSAIGQMSRPMFLYVRTNGTSKIKMKWGMEMRRCLLQSLQQIESMIEAESSVKEKDMTKEFFENKSETWPIGESPKGVEEGSIGKVCRTLLAKSVFNSLYASPQLEGFSAESRKLLLVVQALRDNLEPGTFDLGGLYEAIEECLINDPWVLLNASWFNSFLTHALR</sequence>
<accession>Q463W8</accession>
<organism>
    <name type="scientific">Influenza A virus (strain A/Memphis/102/1972 H3N2)</name>
    <dbReference type="NCBI Taxonomy" id="385640"/>
    <lineage>
        <taxon>Viruses</taxon>
        <taxon>Riboviria</taxon>
        <taxon>Orthornavirae</taxon>
        <taxon>Negarnaviricota</taxon>
        <taxon>Polyploviricotina</taxon>
        <taxon>Insthoviricetes</taxon>
        <taxon>Articulavirales</taxon>
        <taxon>Orthomyxoviridae</taxon>
        <taxon>Alphainfluenzavirus</taxon>
        <taxon>Alphainfluenzavirus influenzae</taxon>
        <taxon>Influenza A virus</taxon>
    </lineage>
</organism>
<dbReference type="EC" id="3.1.-.-" evidence="2"/>
<dbReference type="EMBL" id="CY002101">
    <property type="protein sequence ID" value="AAZ43390.1"/>
    <property type="molecule type" value="Genomic_RNA"/>
</dbReference>
<dbReference type="SMR" id="Q463W8"/>
<dbReference type="MEROPS" id="S62.001"/>
<dbReference type="Proteomes" id="UP000118421">
    <property type="component" value="Genome"/>
</dbReference>
<dbReference type="GO" id="GO:0030430">
    <property type="term" value="C:host cell cytoplasm"/>
    <property type="evidence" value="ECO:0007669"/>
    <property type="project" value="UniProtKB-SubCell"/>
</dbReference>
<dbReference type="GO" id="GO:0042025">
    <property type="term" value="C:host cell nucleus"/>
    <property type="evidence" value="ECO:0007669"/>
    <property type="project" value="UniProtKB-SubCell"/>
</dbReference>
<dbReference type="GO" id="GO:0004519">
    <property type="term" value="F:endonuclease activity"/>
    <property type="evidence" value="ECO:0007669"/>
    <property type="project" value="UniProtKB-KW"/>
</dbReference>
<dbReference type="GO" id="GO:0046872">
    <property type="term" value="F:metal ion binding"/>
    <property type="evidence" value="ECO:0007669"/>
    <property type="project" value="UniProtKB-KW"/>
</dbReference>
<dbReference type="GO" id="GO:0003723">
    <property type="term" value="F:RNA binding"/>
    <property type="evidence" value="ECO:0007669"/>
    <property type="project" value="UniProtKB-UniRule"/>
</dbReference>
<dbReference type="GO" id="GO:0075526">
    <property type="term" value="P:cap snatching"/>
    <property type="evidence" value="ECO:0007669"/>
    <property type="project" value="UniProtKB-UniRule"/>
</dbReference>
<dbReference type="GO" id="GO:0006351">
    <property type="term" value="P:DNA-templated transcription"/>
    <property type="evidence" value="ECO:0007669"/>
    <property type="project" value="UniProtKB-UniRule"/>
</dbReference>
<dbReference type="GO" id="GO:0039657">
    <property type="term" value="P:symbiont-mediated suppression of host gene expression"/>
    <property type="evidence" value="ECO:0007669"/>
    <property type="project" value="UniProtKB-KW"/>
</dbReference>
<dbReference type="GO" id="GO:0039523">
    <property type="term" value="P:symbiont-mediated suppression of host mRNA transcription via inhibition of RNA polymerase II activity"/>
    <property type="evidence" value="ECO:0007669"/>
    <property type="project" value="UniProtKB-UniRule"/>
</dbReference>
<dbReference type="GO" id="GO:0039694">
    <property type="term" value="P:viral RNA genome replication"/>
    <property type="evidence" value="ECO:0007669"/>
    <property type="project" value="InterPro"/>
</dbReference>
<dbReference type="GO" id="GO:0075523">
    <property type="term" value="P:viral translational frameshifting"/>
    <property type="evidence" value="ECO:0007669"/>
    <property type="project" value="UniProtKB-KW"/>
</dbReference>
<dbReference type="FunFam" id="3.40.91.90:FF:000001">
    <property type="entry name" value="Polymerase acidic protein"/>
    <property type="match status" value="1"/>
</dbReference>
<dbReference type="Gene3D" id="3.40.91.90">
    <property type="entry name" value="Influenza RNA-dependent RNA polymerase subunit PA, endonuclease domain"/>
    <property type="match status" value="1"/>
</dbReference>
<dbReference type="HAMAP" id="MF_04063">
    <property type="entry name" value="INFV_PA"/>
    <property type="match status" value="1"/>
</dbReference>
<dbReference type="InterPro" id="IPR037534">
    <property type="entry name" value="INFV_PA"/>
</dbReference>
<dbReference type="InterPro" id="IPR001009">
    <property type="entry name" value="PA/PA-X"/>
</dbReference>
<dbReference type="InterPro" id="IPR038372">
    <property type="entry name" value="PA/PA-X_sf"/>
</dbReference>
<dbReference type="Pfam" id="PF00603">
    <property type="entry name" value="Flu_PA"/>
    <property type="match status" value="1"/>
</dbReference>
<keyword id="KW-1157">Cap snatching</keyword>
<keyword id="KW-0255">Endonuclease</keyword>
<keyword id="KW-1262">Eukaryotic host gene expression shutoff by virus</keyword>
<keyword id="KW-1191">Eukaryotic host transcription shutoff by virus</keyword>
<keyword id="KW-1035">Host cytoplasm</keyword>
<keyword id="KW-1190">Host gene expression shutoff by virus</keyword>
<keyword id="KW-1048">Host nucleus</keyword>
<keyword id="KW-0945">Host-virus interaction</keyword>
<keyword id="KW-0378">Hydrolase</keyword>
<keyword id="KW-1104">Inhibition of host RNA polymerase II by virus</keyword>
<keyword id="KW-0464">Manganese</keyword>
<keyword id="KW-0479">Metal-binding</keyword>
<keyword id="KW-0540">Nuclease</keyword>
<keyword id="KW-0597">Phosphoprotein</keyword>
<keyword id="KW-0688">Ribosomal frameshifting</keyword>
<comment type="function">
    <text evidence="2">Plays an essential role in viral RNA transcription and replication by forming the heterotrimeric polymerase complex together with PB1 and PB2 subunits. The complex transcribes viral mRNAs by using a unique mechanism called cap-snatching. It consists in the hijacking and cleavage of host capped pre-mRNAs. These short capped RNAs are then used as primers for viral mRNAs. The PB2 subunit is responsible for the binding of the 5' cap of cellular pre-mRNAs which are subsequently cleaved after 10-13 nucleotides by the PA subunit that carries the endonuclease activity.</text>
</comment>
<comment type="cofactor">
    <cofactor evidence="2">
        <name>Mn(2+)</name>
        <dbReference type="ChEBI" id="CHEBI:29035"/>
    </cofactor>
    <text evidence="2">Binds 2 manganese ions per subunit.</text>
</comment>
<comment type="subunit">
    <text evidence="1 2">Influenza RNA polymerase is composed of three subunits: PB1, PB2 and PA. Interacts (via C-terminus) with PB1 (via N-terminus).</text>
</comment>
<comment type="subcellular location">
    <subcellularLocation>
        <location evidence="2">Host cytoplasm</location>
    </subcellularLocation>
    <subcellularLocation>
        <location evidence="2">Host nucleus</location>
    </subcellularLocation>
    <text evidence="1 2">PB1 and PA are transported in the host nucleus as a complex.</text>
</comment>
<comment type="alternative products">
    <event type="ribosomal frameshifting"/>
    <isoform>
        <id>Q463W8-1</id>
        <name>PA</name>
        <sequence type="displayed"/>
    </isoform>
    <isoform>
        <id>P0DJT1-1</id>
        <name>PA-X</name>
        <sequence type="external"/>
    </isoform>
</comment>
<comment type="PTM">
    <text evidence="1 2">Phosphorylated on serines and threonines by host kinases, including human casein kinase II.</text>
</comment>
<comment type="similarity">
    <text evidence="2">Belongs to the influenza viruses PA family.</text>
</comment>